<keyword id="KW-0002">3D-structure</keyword>
<keyword id="KW-0010">Activator</keyword>
<keyword id="KW-0963">Cytoplasm</keyword>
<keyword id="KW-1185">Reference proteome</keyword>
<keyword id="KW-0678">Repressor</keyword>
<keyword id="KW-0694">RNA-binding</keyword>
<keyword id="KW-0810">Translation regulation</keyword>
<feature type="chain" id="PRO_0000177080" description="Translational regulator CsrA">
    <location>
        <begin position="1"/>
        <end position="61"/>
    </location>
</feature>
<feature type="mutagenesis site" description="Behaves like wild-type in swarming, pyocyanine production and lipase biosynthesis assays." evidence="5">
    <original>E</original>
    <variation>A</variation>
    <location>
        <position position="10"/>
    </location>
</feature>
<feature type="mutagenesis site" description="Does not complement deletion in swarming, pyocyanine production or lipase biosynthesis assays." evidence="5">
    <original>R</original>
    <variation>A</variation>
    <location>
        <position position="44"/>
    </location>
</feature>
<feature type="strand" evidence="7">
    <location>
        <begin position="2"/>
        <end position="7"/>
    </location>
</feature>
<feature type="strand" evidence="7">
    <location>
        <begin position="11"/>
        <end position="14"/>
    </location>
</feature>
<feature type="turn" evidence="7">
    <location>
        <begin position="15"/>
        <end position="17"/>
    </location>
</feature>
<feature type="strand" evidence="7">
    <location>
        <begin position="18"/>
        <end position="26"/>
    </location>
</feature>
<feature type="strand" evidence="7">
    <location>
        <begin position="29"/>
        <end position="37"/>
    </location>
</feature>
<feature type="strand" evidence="7">
    <location>
        <begin position="42"/>
        <end position="44"/>
    </location>
</feature>
<feature type="helix" evidence="7">
    <location>
        <begin position="45"/>
        <end position="54"/>
    </location>
</feature>
<protein>
    <recommendedName>
        <fullName evidence="1">Translational regulator CsrA</fullName>
    </recommendedName>
    <alternativeName>
        <fullName evidence="1">Carbon storage regulator</fullName>
    </alternativeName>
    <alternativeName>
        <fullName evidence="6">Global translational regulatory protein RsmA</fullName>
    </alternativeName>
</protein>
<gene>
    <name evidence="1" type="primary">csrA</name>
    <name evidence="6" type="synonym">rsmA</name>
    <name type="ordered locus">PA0905</name>
</gene>
<organism>
    <name type="scientific">Pseudomonas aeruginosa (strain ATCC 15692 / DSM 22644 / CIP 104116 / JCM 14847 / LMG 12228 / 1C / PRS 101 / PAO1)</name>
    <dbReference type="NCBI Taxonomy" id="208964"/>
    <lineage>
        <taxon>Bacteria</taxon>
        <taxon>Pseudomonadati</taxon>
        <taxon>Pseudomonadota</taxon>
        <taxon>Gammaproteobacteria</taxon>
        <taxon>Pseudomonadales</taxon>
        <taxon>Pseudomonadaceae</taxon>
        <taxon>Pseudomonas</taxon>
    </lineage>
</organism>
<evidence type="ECO:0000255" key="1">
    <source>
        <dbReference type="HAMAP-Rule" id="MF_00167"/>
    </source>
</evidence>
<evidence type="ECO:0000269" key="2">
    <source>
    </source>
</evidence>
<evidence type="ECO:0000269" key="3">
    <source>
    </source>
</evidence>
<evidence type="ECO:0000269" key="4">
    <source>
    </source>
</evidence>
<evidence type="ECO:0000269" key="5">
    <source>
    </source>
</evidence>
<evidence type="ECO:0000303" key="6">
    <source>
    </source>
</evidence>
<evidence type="ECO:0007829" key="7">
    <source>
        <dbReference type="PDB" id="1VPZ"/>
    </source>
</evidence>
<proteinExistence type="evidence at protein level"/>
<sequence length="61" mass="6909">MLILTRRVGETLMVGDDVTVTVLGVKGNQVRIGVNAPKEVAVHREEIYQRIQKEKDQEPNH</sequence>
<reference key="1">
    <citation type="journal article" date="2001" name="J. Bacteriol.">
        <title>The global posttranscriptional regulator RsmA modulates production of virulence determinants and N-acylhomoserine lactones in Pseudomonas aeruginosa.</title>
        <authorList>
            <person name="Pessi G."/>
            <person name="Williams F."/>
            <person name="Hindle Z."/>
            <person name="Heurlier K."/>
            <person name="Holden M.T."/>
            <person name="Camara M."/>
            <person name="Haas D."/>
            <person name="Williams P."/>
        </authorList>
    </citation>
    <scope>NUCLEOTIDE SEQUENCE [GENOMIC DNA]</scope>
    <scope>FUNCTION IN TRANSLATION REPRESSION</scope>
    <scope>INDUCTION</scope>
    <scope>DISRUPTION PHENOTYPE</scope>
    <source>
        <strain>ATCC 15692 / DSM 22644 / CIP 104116 / JCM 14847 / LMG 12228 / 1C / PRS 101 / PAO1</strain>
    </source>
</reference>
<reference key="2">
    <citation type="journal article" date="2002" name="J. Bacteriol.">
        <title>The global posttranscriptional regulator RsmA modulates production of virulence determinants and N-acylhomoserine lactones in Pseudomonas aeruginosa.</title>
        <authorList>
            <person name="Pessi G."/>
            <person name="Williams F."/>
            <person name="Hindle Z."/>
            <person name="Heurlier K."/>
            <person name="Holden M.T."/>
            <person name="Camara M."/>
            <person name="Haas D."/>
            <person name="Williams P."/>
        </authorList>
    </citation>
    <scope>ERRATUM OF PUBMED:11673439</scope>
</reference>
<reference key="3">
    <citation type="journal article" date="2000" name="Nature">
        <title>Complete genome sequence of Pseudomonas aeruginosa PAO1, an opportunistic pathogen.</title>
        <authorList>
            <person name="Stover C.K."/>
            <person name="Pham X.-Q.T."/>
            <person name="Erwin A.L."/>
            <person name="Mizoguchi S.D."/>
            <person name="Warrener P."/>
            <person name="Hickey M.J."/>
            <person name="Brinkman F.S.L."/>
            <person name="Hufnagle W.O."/>
            <person name="Kowalik D.J."/>
            <person name="Lagrou M."/>
            <person name="Garber R.L."/>
            <person name="Goltry L."/>
            <person name="Tolentino E."/>
            <person name="Westbrock-Wadman S."/>
            <person name="Yuan Y."/>
            <person name="Brody L.L."/>
            <person name="Coulter S.N."/>
            <person name="Folger K.R."/>
            <person name="Kas A."/>
            <person name="Larbig K."/>
            <person name="Lim R.M."/>
            <person name="Smith K.A."/>
            <person name="Spencer D.H."/>
            <person name="Wong G.K.-S."/>
            <person name="Wu Z."/>
            <person name="Paulsen I.T."/>
            <person name="Reizer J."/>
            <person name="Saier M.H. Jr."/>
            <person name="Hancock R.E.W."/>
            <person name="Lory S."/>
            <person name="Olson M.V."/>
        </authorList>
    </citation>
    <scope>NUCLEOTIDE SEQUENCE [LARGE SCALE GENOMIC DNA]</scope>
    <source>
        <strain>ATCC 15692 / DSM 22644 / CIP 104116 / JCM 14847 / LMG 12228 / 1C / PRS 101 / PAO1</strain>
    </source>
</reference>
<reference key="4">
    <citation type="journal article" date="2004" name="J. Bacteriol.">
        <title>Positive control of swarming, rhamnolipid synthesis, and lipase production by the posttranscriptional RsmA/RsmZ system in Pseudomonas aeruginosa PAO1.</title>
        <authorList>
            <person name="Heurlier K."/>
            <person name="Williams F."/>
            <person name="Heeb S."/>
            <person name="Dormond C."/>
            <person name="Pessi G."/>
            <person name="Singer D."/>
            <person name="Camara M."/>
            <person name="Williams P."/>
            <person name="Haas D."/>
        </authorList>
    </citation>
    <scope>FUNCTION IN TRANSLATION ACTIVATION</scope>
    <scope>SUBUNIT</scope>
    <scope>DISRUPTION PHENOTYPE</scope>
    <source>
        <strain>ATCC 15692 / DSM 22644 / CIP 104116 / JCM 14847 / LMG 12228 / 1C / PRS 101 / PAO1</strain>
    </source>
</reference>
<reference key="5">
    <citation type="journal article" date="2006" name="J. Mol. Biol.">
        <title>Functional analysis of the post-transcriptional regulator RsmA reveals a novel RNA-binding site.</title>
        <authorList>
            <person name="Heeb S."/>
            <person name="Kuehne S.A."/>
            <person name="Bycroft M."/>
            <person name="Crivii S."/>
            <person name="Allen M.D."/>
            <person name="Haas D."/>
            <person name="Camara M."/>
            <person name="Williams P."/>
        </authorList>
    </citation>
    <scope>FUNCTION</scope>
    <scope>DISRUPTION PHENOTYPE</scope>
    <scope>MUTAGENESIS OF GLU-10 AND ARG-44</scope>
    <scope>RNA-BINDING</scope>
    <source>
        <strain>ATCC 15692 / DSM 22644 / CIP 104116 / JCM 14847 / LMG 12228 / 1C / PRS 101 / PAO1</strain>
    </source>
</reference>
<reference key="6">
    <citation type="journal article" date="2005" name="Proteins">
        <title>Crystal structure of the global regulatory protein CsrA from Pseudomonas putida at 2.05 A resolution reveals a new fold.</title>
        <authorList>
            <person name="Rife C."/>
            <person name="Schwarzenbacher R."/>
            <person name="McMullan D."/>
            <person name="Abdubek P."/>
            <person name="Ambing E."/>
            <person name="Axelrod H."/>
            <person name="Biorac T."/>
            <person name="Canaves J.M."/>
            <person name="Chiu H.-J."/>
            <person name="Deacon A.M."/>
            <person name="DiDonato M."/>
            <person name="Elsliger M.-A."/>
            <person name="Godzik A."/>
            <person name="Grittini C."/>
            <person name="Grzechnik S.K."/>
            <person name="Hale J."/>
            <person name="Hampton E."/>
            <person name="Han G.W."/>
            <person name="Haugen J."/>
            <person name="Hornsby M."/>
            <person name="Jaroszewski L."/>
            <person name="Klock H.E."/>
            <person name="Koesema E."/>
            <person name="Kreusch A."/>
            <person name="Kuhn P."/>
            <person name="Lesley S.A."/>
            <person name="Miller M.D."/>
            <person name="Moy K."/>
            <person name="Nigoghossian E."/>
            <person name="Paulsen J."/>
            <person name="Quijano K."/>
            <person name="Reyes R."/>
            <person name="Sims E."/>
            <person name="Spraggon G."/>
            <person name="Stevens R.C."/>
            <person name="van den Bedem H."/>
            <person name="Velasquez J."/>
            <person name="Vincent J."/>
            <person name="White A."/>
            <person name="Wolf G."/>
            <person name="Xu Q."/>
            <person name="Hodgson K.O."/>
            <person name="Wooley J."/>
            <person name="Wilson I.A."/>
        </authorList>
    </citation>
    <scope>X-RAY CRYSTALLOGRAPHY (2.05 ANGSTROMS)</scope>
    <scope>SUBUNIT</scope>
    <source>
        <strain>ATCC 15692 / DSM 22644 / CIP 104116 / JCM 14847 / LMG 12228 / 1C / PRS 101 / PAO1</strain>
    </source>
</reference>
<name>CSRA_PSEAE</name>
<dbReference type="EMBL" id="AF061757">
    <property type="protein sequence ID" value="AAC16242.1"/>
    <property type="molecule type" value="Genomic_DNA"/>
</dbReference>
<dbReference type="EMBL" id="AE004091">
    <property type="protein sequence ID" value="AAG04294.1"/>
    <property type="molecule type" value="Genomic_DNA"/>
</dbReference>
<dbReference type="PIR" id="D83531">
    <property type="entry name" value="D83531"/>
</dbReference>
<dbReference type="RefSeq" id="NP_249596.1">
    <property type="nucleotide sequence ID" value="NC_002516.2"/>
</dbReference>
<dbReference type="RefSeq" id="WP_003085981.1">
    <property type="nucleotide sequence ID" value="NZ_QZGE01000007.1"/>
</dbReference>
<dbReference type="PDB" id="1VPZ">
    <property type="method" value="X-ray"/>
    <property type="resolution" value="2.05 A"/>
    <property type="chains" value="A/B=1-61"/>
</dbReference>
<dbReference type="PDB" id="7YR6">
    <property type="method" value="EM"/>
    <property type="resolution" value="4.80 A"/>
    <property type="chains" value="B/C/D/E=1-55"/>
</dbReference>
<dbReference type="PDB" id="7YR7">
    <property type="method" value="EM"/>
    <property type="resolution" value="3.80 A"/>
    <property type="chains" value="B/C/D/E/F/G=1-55"/>
</dbReference>
<dbReference type="PDBsum" id="1VPZ"/>
<dbReference type="PDBsum" id="7YR6"/>
<dbReference type="PDBsum" id="7YR7"/>
<dbReference type="SMR" id="O69078"/>
<dbReference type="FunCoup" id="O69078">
    <property type="interactions" value="312"/>
</dbReference>
<dbReference type="STRING" id="208964.PA0905"/>
<dbReference type="CARD" id="ARO:3005069">
    <property type="molecule name" value="rsmA"/>
    <property type="mechanism identifier" value="ARO:0010000"/>
    <property type="mechanism name" value="antibiotic efflux"/>
</dbReference>
<dbReference type="PaxDb" id="208964-PA0905"/>
<dbReference type="DNASU" id="878352"/>
<dbReference type="GeneID" id="79915115"/>
<dbReference type="GeneID" id="878352"/>
<dbReference type="KEGG" id="pae:PA0905"/>
<dbReference type="PATRIC" id="fig|208964.12.peg.940"/>
<dbReference type="PseudoCAP" id="PA0905"/>
<dbReference type="HOGENOM" id="CLU_164837_2_1_6"/>
<dbReference type="InParanoid" id="O69078"/>
<dbReference type="OrthoDB" id="9809061at2"/>
<dbReference type="PhylomeDB" id="O69078"/>
<dbReference type="BioCyc" id="PAER208964:G1FZ6-921-MONOMER"/>
<dbReference type="EvolutionaryTrace" id="O69078"/>
<dbReference type="Proteomes" id="UP000002438">
    <property type="component" value="Chromosome"/>
</dbReference>
<dbReference type="GO" id="GO:0005829">
    <property type="term" value="C:cytosol"/>
    <property type="evidence" value="ECO:0000318"/>
    <property type="project" value="GO_Central"/>
</dbReference>
<dbReference type="GO" id="GO:0048027">
    <property type="term" value="F:mRNA 5'-UTR binding"/>
    <property type="evidence" value="ECO:0007669"/>
    <property type="project" value="UniProtKB-UniRule"/>
</dbReference>
<dbReference type="GO" id="GO:0006402">
    <property type="term" value="P:mRNA catabolic process"/>
    <property type="evidence" value="ECO:0007669"/>
    <property type="project" value="InterPro"/>
</dbReference>
<dbReference type="GO" id="GO:0045947">
    <property type="term" value="P:negative regulation of translational initiation"/>
    <property type="evidence" value="ECO:0007669"/>
    <property type="project" value="UniProtKB-UniRule"/>
</dbReference>
<dbReference type="GO" id="GO:0045948">
    <property type="term" value="P:positive regulation of translational initiation"/>
    <property type="evidence" value="ECO:0007669"/>
    <property type="project" value="UniProtKB-UniRule"/>
</dbReference>
<dbReference type="GO" id="GO:0030254">
    <property type="term" value="P:protein secretion by the type III secretion system"/>
    <property type="evidence" value="ECO:0000315"/>
    <property type="project" value="PseudoCAP"/>
</dbReference>
<dbReference type="GO" id="GO:0033103">
    <property type="term" value="P:protein secretion by the type VI secretion system"/>
    <property type="evidence" value="ECO:0000315"/>
    <property type="project" value="PseudoCAP"/>
</dbReference>
<dbReference type="GO" id="GO:0009372">
    <property type="term" value="P:quorum sensing"/>
    <property type="evidence" value="ECO:0000315"/>
    <property type="project" value="PseudoCAP"/>
</dbReference>
<dbReference type="GO" id="GO:0006109">
    <property type="term" value="P:regulation of carbohydrate metabolic process"/>
    <property type="evidence" value="ECO:0007669"/>
    <property type="project" value="UniProtKB-UniRule"/>
</dbReference>
<dbReference type="GO" id="GO:0043455">
    <property type="term" value="P:regulation of secondary metabolic process"/>
    <property type="evidence" value="ECO:0000315"/>
    <property type="project" value="PseudoCAP"/>
</dbReference>
<dbReference type="GO" id="GO:1900190">
    <property type="term" value="P:regulation of single-species biofilm formation"/>
    <property type="evidence" value="ECO:0000315"/>
    <property type="project" value="PseudoCAP"/>
</dbReference>
<dbReference type="FunFam" id="2.60.40.4380:FF:000001">
    <property type="entry name" value="Translational regulator CsrA"/>
    <property type="match status" value="1"/>
</dbReference>
<dbReference type="Gene3D" id="2.60.40.4380">
    <property type="entry name" value="Translational regulator CsrA"/>
    <property type="match status" value="1"/>
</dbReference>
<dbReference type="HAMAP" id="MF_00167">
    <property type="entry name" value="CsrA"/>
    <property type="match status" value="1"/>
</dbReference>
<dbReference type="InterPro" id="IPR003751">
    <property type="entry name" value="CsrA"/>
</dbReference>
<dbReference type="InterPro" id="IPR036107">
    <property type="entry name" value="CsrA_sf"/>
</dbReference>
<dbReference type="NCBIfam" id="TIGR00202">
    <property type="entry name" value="csrA"/>
    <property type="match status" value="1"/>
</dbReference>
<dbReference type="NCBIfam" id="NF002469">
    <property type="entry name" value="PRK01712.1"/>
    <property type="match status" value="1"/>
</dbReference>
<dbReference type="PANTHER" id="PTHR34984">
    <property type="entry name" value="CARBON STORAGE REGULATOR"/>
    <property type="match status" value="1"/>
</dbReference>
<dbReference type="PANTHER" id="PTHR34984:SF1">
    <property type="entry name" value="CARBON STORAGE REGULATOR"/>
    <property type="match status" value="1"/>
</dbReference>
<dbReference type="Pfam" id="PF02599">
    <property type="entry name" value="CsrA"/>
    <property type="match status" value="1"/>
</dbReference>
<dbReference type="SUPFAM" id="SSF117130">
    <property type="entry name" value="CsrA-like"/>
    <property type="match status" value="1"/>
</dbReference>
<accession>O69078</accession>
<comment type="function">
    <text evidence="1">A key translational regulator that binds mRNA to regulate translation initiation and/or mRNA stability. Mediates global changes in gene expression, shifting from rapid growth to stress survival by linking envelope stress, the stringent response and the catabolite repression systems. Usually binds in the 5'-UTR; binding at or near the Shine-Dalgarno sequence prevents ribosome-binding, repressing translation, binding elsewhere in the 5'-UTR can activate translation and/or stabilize the mRNA. Its function is antagonized by small RNA(s).</text>
</comment>
<comment type="function">
    <text evidence="2 3 5">Binds to mRNA to regulate gene activity at a post-transcriptional level (Probable). Represses expression of many toxic extracellular enzymes and compounds; decreases translation of lasI and rhlI (PubMed:11673439). Positively controls swarming motility and rhanolipid and lipase, possibly via expression of rhlA; activates transcription of the CsrA/RsmA antagonistic sRNA RsmZ (PubMed:15126453). Overexpression dramatically reduces extracellular protease, elastase (lasB) and staphyolytic (lasA) activities, decreases HCN production, decreases levels of autoinducers 3-oxo-C12-HSL (3-oxo-N-(tetrahydro-2-oxo-3-furanyl)-dodecanamide) and C4-HSL (N-butanoylhomoserine lactone), and abolishes production of cytotoxic internal lectin PA-IL (lecA) (PubMed:11673439). Control of hcn expression is post-transcriptional (PubMed:11673439). Replaces endogenous gene(s) in E.coli and P.fluorescens (PubMed:16359708).</text>
</comment>
<comment type="function">
    <text evidence="3">Probably binds to and is sequestered by non-coding small RNA (sRNA) RsmZ; overexpression of rsmZ produces very similar phenotypes to deletion of rsmA, while rsmZ deletion has no phenotype (PubMed:15126453).</text>
</comment>
<comment type="subunit">
    <text evidence="1 4">Homodimer; the beta-strands of each monomer intercalate to form a hydrophobic core while the alpha-helices form wings that extend away from the core (PubMed:16104018).</text>
</comment>
<comment type="subcellular location">
    <subcellularLocation>
        <location evidence="1">Cytoplasm</location>
    </subcellularLocation>
</comment>
<comment type="induction">
    <text evidence="2">Low levels of expression in early log phase, increases about 3-fold by stationary phase (at protein level) (PubMed:11673439).</text>
</comment>
<comment type="disruption phenotype">
    <text evidence="2 3 5">Grows slightly more slowly; 30% reduction in staphylolytic activity, increased production of lectin PA-IL, blue-green pigment pyocyanine and HCN (PubMed:11673439). Increases levels of autoinducers 3-oxo-C12-HSL (3-oxo-N-(tetrahydro-2-oxo-3-furanyl)-dodecanamide) and C4-HSL (N-butanoylhomoserine lactone) in early log phase which becomes nearly wild-type (3-oxo-C12-HSL) or 2-fold greater (C4-HSL) by late log phase (PubMed:11673439). Loss of swarming mobility and rhamnolipid production, loss of sRNA RsmZ expression, decreased lipase, increases synthesis of pyocyanine and HCN (PubMed:15126453). Loss of swarming mobility, overproduction of pyocyanine, reduction in lipase biosynthesis (PubMed:16359708).</text>
</comment>
<comment type="similarity">
    <text evidence="1">Belongs to the CsrA/RsmA family.</text>
</comment>